<name>GLND_AZOVI</name>
<gene>
    <name evidence="1" type="primary">glnD</name>
    <name type="synonym">nfrX</name>
</gene>
<keyword id="KW-0378">Hydrolase</keyword>
<keyword id="KW-0460">Magnesium</keyword>
<keyword id="KW-0511">Multifunctional enzyme</keyword>
<keyword id="KW-0535">Nitrogen fixation</keyword>
<keyword id="KW-0548">Nucleotidyltransferase</keyword>
<keyword id="KW-0677">Repeat</keyword>
<keyword id="KW-0808">Transferase</keyword>
<protein>
    <recommendedName>
        <fullName evidence="1">Bifunctional uridylyltransferase/uridylyl-removing enzyme</fullName>
        <shortName evidence="1">UTase/UR</shortName>
    </recommendedName>
    <alternativeName>
        <fullName evidence="1">Bifunctional [protein-PII] modification enzyme</fullName>
    </alternativeName>
    <alternativeName>
        <fullName evidence="1">Bifunctional nitrogen sensor protein</fullName>
    </alternativeName>
    <domain>
        <recommendedName>
            <fullName evidence="1">[Protein-PII] uridylyltransferase</fullName>
            <shortName evidence="1">PII uridylyltransferase</shortName>
            <shortName evidence="1">UTase</shortName>
            <ecNumber evidence="1">2.7.7.59</ecNumber>
        </recommendedName>
    </domain>
    <domain>
        <recommendedName>
            <fullName evidence="1">[Protein-PII]-UMP uridylyl-removing enzyme</fullName>
            <shortName evidence="1">UR</shortName>
            <ecNumber evidence="1">3.1.4.-</ecNumber>
        </recommendedName>
    </domain>
</protein>
<evidence type="ECO:0000255" key="1">
    <source>
        <dbReference type="HAMAP-Rule" id="MF_00277"/>
    </source>
</evidence>
<evidence type="ECO:0000255" key="2">
    <source>
        <dbReference type="PROSITE-ProRule" id="PRU01175"/>
    </source>
</evidence>
<evidence type="ECO:0000269" key="3">
    <source>
    </source>
</evidence>
<evidence type="ECO:0000269" key="4">
    <source>
    </source>
</evidence>
<comment type="function">
    <text evidence="3 4">Modifies, by uridylylation and deuridylylation, the PII regulatory protein GlnK, in response to the nitrogen status of the cell that GlnD senses through the glutamine level. Under low glutamine levels, catalyzes the conversion of the PII protein and UTP to PII-UMP and PPi, while under higher glutamine levels, GlnD hydrolyzes PII-UMP to PII and UMP (deuridylylation). Thus, controls uridylylation state and activity of the PII protein, and plays an important role in the regulation of nitrogen fixation and metabolism.</text>
</comment>
<comment type="catalytic activity">
    <reaction evidence="1">
        <text>[protein-PII]-L-tyrosine + UTP = [protein-PII]-uridylyl-L-tyrosine + diphosphate</text>
        <dbReference type="Rhea" id="RHEA:13673"/>
        <dbReference type="Rhea" id="RHEA-COMP:12147"/>
        <dbReference type="Rhea" id="RHEA-COMP:12148"/>
        <dbReference type="ChEBI" id="CHEBI:33019"/>
        <dbReference type="ChEBI" id="CHEBI:46398"/>
        <dbReference type="ChEBI" id="CHEBI:46858"/>
        <dbReference type="ChEBI" id="CHEBI:90602"/>
        <dbReference type="EC" id="2.7.7.59"/>
    </reaction>
</comment>
<comment type="catalytic activity">
    <reaction evidence="1">
        <text>[protein-PII]-uridylyl-L-tyrosine + H2O = [protein-PII]-L-tyrosine + UMP + H(+)</text>
        <dbReference type="Rhea" id="RHEA:48600"/>
        <dbReference type="Rhea" id="RHEA-COMP:12147"/>
        <dbReference type="Rhea" id="RHEA-COMP:12148"/>
        <dbReference type="ChEBI" id="CHEBI:15377"/>
        <dbReference type="ChEBI" id="CHEBI:15378"/>
        <dbReference type="ChEBI" id="CHEBI:46858"/>
        <dbReference type="ChEBI" id="CHEBI:57865"/>
        <dbReference type="ChEBI" id="CHEBI:90602"/>
    </reaction>
</comment>
<comment type="cofactor">
    <cofactor evidence="1">
        <name>Mg(2+)</name>
        <dbReference type="ChEBI" id="CHEBI:18420"/>
    </cofactor>
</comment>
<comment type="activity regulation">
    <text evidence="1">Uridylyltransferase (UTase) activity is inhibited by glutamine, while glutamine activates uridylyl-removing (UR) activity.</text>
</comment>
<comment type="domain">
    <text evidence="1">Has four distinct domains: an N-terminal nucleotidyltransferase (NT) domain responsible for UTase activity, a central HD domain that encodes UR activity, and two C-terminal ACT domains that seem to have a role in glutamine sensing.</text>
</comment>
<comment type="disruption phenotype">
    <text evidence="3">Cells lacking this gene are not viable unless a second mutation occurs, either spontaneously or by design, resulting in the inability of glutamine synthetase (GS) to be adenylylated.</text>
</comment>
<comment type="similarity">
    <text evidence="1">Belongs to the GlnD family.</text>
</comment>
<sequence length="899" mass="102580">MPQVDPDLFDPGQFQAELALKSSPIPAYKKALRCAREVLDARFQEGRDIRRLIEDRAWFVDQILALAWNRFDWSEDADIALIAVGGYGRGELHPYSDIDLLILMDGADHEVFREPIEGFLTLLWDIGLEVGQSVRSLAECAEEAQADLTVITNLMESRTIAGPEHLRQRMQEVTSAQRMWPSRAFFLAKRDEQKTRHARYNDTEYNLEPNVKGSPGGLRDIQTLLWIARRQFGTINLHAMVGQGFLLESEYTLLASSQEFLWKVRYALHMLAGRAEDRLLFDLQRQIAGLLGYEDSDAKLAVERFMQKYYRVVLGIAELTELVFQHFEEVILPGDAAGRVEPLNERFQVRDGYLEVTHAGVFQETPSALLEIFVLLARRPEIRGVRADTIRLLRDHRYLIDDAFRRDPHNTGLFIELFKSRQGIHRNLRRMNRYGILGRYLPEFGHIVGQMQHDLFHIYTVDAHTLNLIKNLRKLFWPELAEKYPLASKLIEKLPKPELIYLAGLYHDIGKGRGGDHSELGAADALAFCQRHDLPAMDTQLIVWLVRNHLLMSTTAQRKDLSDPQVIFDFAQKVRDQTYLDYLYVLTVADINATNPTLWNSWRASLLRQLYTETKHALRRGLEQPVGREEQIRQTQKAALDILVRSGTDPDDAEHLWTQLGDDYFLRHTSSDIAWHTEAILQHPSSGGPLVLIKETTQREFEGATQIFIYAPDQHDFFAVTVAAMDQLNLSIHDARVITSTSQFTLDTYIVLDADGGSIGNNPARIQEIRQGLVEALRNPADYPTIIQRRVPRQLKHFAFAPQVTIQNDALRPVTILEIIAPDRPGLLARIGKIFLDFDLSLQNAKIATLGERVEDVFFVTDAHNQPLSDPELCARLQLAIAEQLADGDSYIQPSRISI</sequence>
<proteinExistence type="evidence at protein level"/>
<feature type="chain" id="PRO_0000192717" description="Bifunctional uridylyltransferase/uridylyl-removing enzyme">
    <location>
        <begin position="1"/>
        <end position="899"/>
    </location>
</feature>
<feature type="domain" description="HD" evidence="2">
    <location>
        <begin position="461"/>
        <end position="583"/>
    </location>
</feature>
<feature type="domain" description="ACT 1" evidence="1">
    <location>
        <begin position="706"/>
        <end position="789"/>
    </location>
</feature>
<feature type="domain" description="ACT 2" evidence="1">
    <location>
        <begin position="816"/>
        <end position="899"/>
    </location>
</feature>
<feature type="region of interest" description="Uridylyltransferase">
    <location>
        <begin position="1"/>
        <end position="342"/>
    </location>
</feature>
<feature type="region of interest" description="Uridylyl-removing">
    <location>
        <begin position="343"/>
        <end position="705"/>
    </location>
</feature>
<dbReference type="EC" id="2.7.7.59" evidence="1"/>
<dbReference type="EC" id="3.1.4.-" evidence="1"/>
<dbReference type="EMBL" id="X59610">
    <property type="protein sequence ID" value="CAA42173.1"/>
    <property type="molecule type" value="Genomic_DNA"/>
</dbReference>
<dbReference type="PIR" id="S24223">
    <property type="entry name" value="S24223"/>
</dbReference>
<dbReference type="RefSeq" id="WP_012702416.1">
    <property type="nucleotide sequence ID" value="NZ_FPKM01000003.1"/>
</dbReference>
<dbReference type="SMR" id="P36223"/>
<dbReference type="OMA" id="GLMQFDL"/>
<dbReference type="GO" id="GO:0008773">
    <property type="term" value="F:[protein-PII] uridylyltransferase activity"/>
    <property type="evidence" value="ECO:0007669"/>
    <property type="project" value="UniProtKB-UniRule"/>
</dbReference>
<dbReference type="GO" id="GO:0008081">
    <property type="term" value="F:phosphoric diester hydrolase activity"/>
    <property type="evidence" value="ECO:0007669"/>
    <property type="project" value="UniProtKB-UniRule"/>
</dbReference>
<dbReference type="GO" id="GO:0009399">
    <property type="term" value="P:nitrogen fixation"/>
    <property type="evidence" value="ECO:0007669"/>
    <property type="project" value="UniProtKB-KW"/>
</dbReference>
<dbReference type="GO" id="GO:0006808">
    <property type="term" value="P:regulation of nitrogen utilization"/>
    <property type="evidence" value="ECO:0007669"/>
    <property type="project" value="UniProtKB-UniRule"/>
</dbReference>
<dbReference type="CDD" id="cd04899">
    <property type="entry name" value="ACT_ACR-UUR-like_2"/>
    <property type="match status" value="1"/>
</dbReference>
<dbReference type="CDD" id="cd04900">
    <property type="entry name" value="ACT_UUR-like_1"/>
    <property type="match status" value="1"/>
</dbReference>
<dbReference type="CDD" id="cd00077">
    <property type="entry name" value="HDc"/>
    <property type="match status" value="1"/>
</dbReference>
<dbReference type="CDD" id="cd05401">
    <property type="entry name" value="NT_GlnE_GlnD_like"/>
    <property type="match status" value="1"/>
</dbReference>
<dbReference type="FunFam" id="1.10.3090.10:FF:000005">
    <property type="entry name" value="Bifunctional uridylyltransferase/uridylyl-removing enzyme"/>
    <property type="match status" value="1"/>
</dbReference>
<dbReference type="Gene3D" id="3.30.460.10">
    <property type="entry name" value="Beta Polymerase, domain 2"/>
    <property type="match status" value="1"/>
</dbReference>
<dbReference type="Gene3D" id="1.10.3090.10">
    <property type="entry name" value="cca-adding enzyme, domain 2"/>
    <property type="match status" value="1"/>
</dbReference>
<dbReference type="HAMAP" id="MF_00277">
    <property type="entry name" value="PII_uridylyl_transf"/>
    <property type="match status" value="1"/>
</dbReference>
<dbReference type="InterPro" id="IPR045865">
    <property type="entry name" value="ACT-like_dom_sf"/>
</dbReference>
<dbReference type="InterPro" id="IPR002912">
    <property type="entry name" value="ACT_dom"/>
</dbReference>
<dbReference type="InterPro" id="IPR003607">
    <property type="entry name" value="HD/PDEase_dom"/>
</dbReference>
<dbReference type="InterPro" id="IPR006674">
    <property type="entry name" value="HD_domain"/>
</dbReference>
<dbReference type="InterPro" id="IPR043519">
    <property type="entry name" value="NT_sf"/>
</dbReference>
<dbReference type="InterPro" id="IPR013546">
    <property type="entry name" value="PII_UdlTrfase/GS_AdlTrfase"/>
</dbReference>
<dbReference type="InterPro" id="IPR002934">
    <property type="entry name" value="Polymerase_NTP_transf_dom"/>
</dbReference>
<dbReference type="InterPro" id="IPR010043">
    <property type="entry name" value="UTase/UR"/>
</dbReference>
<dbReference type="NCBIfam" id="NF001366">
    <property type="entry name" value="PRK00275.1"/>
    <property type="match status" value="1"/>
</dbReference>
<dbReference type="NCBIfam" id="TIGR01693">
    <property type="entry name" value="UTase_glnD"/>
    <property type="match status" value="1"/>
</dbReference>
<dbReference type="PANTHER" id="PTHR47320">
    <property type="entry name" value="BIFUNCTIONAL URIDYLYLTRANSFERASE/URIDYLYL-REMOVING ENZYME"/>
    <property type="match status" value="1"/>
</dbReference>
<dbReference type="PANTHER" id="PTHR47320:SF1">
    <property type="entry name" value="BIFUNCTIONAL URIDYLYLTRANSFERASE_URIDYLYL-REMOVING ENZYME"/>
    <property type="match status" value="1"/>
</dbReference>
<dbReference type="Pfam" id="PF01842">
    <property type="entry name" value="ACT"/>
    <property type="match status" value="1"/>
</dbReference>
<dbReference type="Pfam" id="PF08335">
    <property type="entry name" value="GlnD_UR_UTase"/>
    <property type="match status" value="1"/>
</dbReference>
<dbReference type="Pfam" id="PF01966">
    <property type="entry name" value="HD"/>
    <property type="match status" value="1"/>
</dbReference>
<dbReference type="Pfam" id="PF01909">
    <property type="entry name" value="NTP_transf_2"/>
    <property type="match status" value="1"/>
</dbReference>
<dbReference type="PIRSF" id="PIRSF006288">
    <property type="entry name" value="PII_uridyltransf"/>
    <property type="match status" value="1"/>
</dbReference>
<dbReference type="SMART" id="SM00471">
    <property type="entry name" value="HDc"/>
    <property type="match status" value="1"/>
</dbReference>
<dbReference type="SUPFAM" id="SSF55021">
    <property type="entry name" value="ACT-like"/>
    <property type="match status" value="1"/>
</dbReference>
<dbReference type="SUPFAM" id="SSF109604">
    <property type="entry name" value="HD-domain/PDEase-like"/>
    <property type="match status" value="1"/>
</dbReference>
<dbReference type="SUPFAM" id="SSF81301">
    <property type="entry name" value="Nucleotidyltransferase"/>
    <property type="match status" value="1"/>
</dbReference>
<dbReference type="SUPFAM" id="SSF81593">
    <property type="entry name" value="Nucleotidyltransferase substrate binding subunit/domain"/>
    <property type="match status" value="1"/>
</dbReference>
<dbReference type="PROSITE" id="PS51671">
    <property type="entry name" value="ACT"/>
    <property type="match status" value="2"/>
</dbReference>
<dbReference type="PROSITE" id="PS51831">
    <property type="entry name" value="HD"/>
    <property type="match status" value="1"/>
</dbReference>
<reference key="1">
    <citation type="journal article" date="1991" name="J. Bacteriol.">
        <title>The product of the nitrogen fixation regulatory gene nfrX of Azotobacter vinelandii is functionally and structurally homologous to the uridylyltransferase encoded by glnD in enteric bacteria.</title>
        <authorList>
            <person name="Contreras A."/>
            <person name="Drummond M."/>
            <person name="Bali A."/>
            <person name="Blanco G."/>
            <person name="Garcia E."/>
            <person name="Bush G."/>
            <person name="Kennedy C."/>
            <person name="Merrick M."/>
        </authorList>
    </citation>
    <scope>NUCLEOTIDE SEQUENCE [GENOMIC DNA]</scope>
    <scope>FUNCTION</scope>
    <scope>COMPLEMENTATION OF E.COLI GLND MUTANT</scope>
    <scope>ROLE IN NITROGEN FIXATION</scope>
    <source>
        <strain>OP / UW136</strain>
    </source>
</reference>
<reference key="2">
    <citation type="journal article" date="2001" name="Microbiology">
        <title>Lethality of glnD null mutations in Azotobacter vinelandii is suppressible by prevention of glutamine synthetase adenylylation.</title>
        <authorList>
            <person name="Colnaghi R."/>
            <person name="Rudnick P."/>
            <person name="He L."/>
            <person name="Green A."/>
            <person name="Yan D."/>
            <person name="Larson E."/>
            <person name="Kennedy C."/>
        </authorList>
    </citation>
    <scope>FUNCTION AS PII URIDYLYLTRANSFERASE</scope>
    <scope>DISRUPTION PHENOTYPE</scope>
    <source>
        <strain>OP / UW136</strain>
    </source>
</reference>
<organism>
    <name type="scientific">Azotobacter vinelandii</name>
    <dbReference type="NCBI Taxonomy" id="354"/>
    <lineage>
        <taxon>Bacteria</taxon>
        <taxon>Pseudomonadati</taxon>
        <taxon>Pseudomonadota</taxon>
        <taxon>Gammaproteobacteria</taxon>
        <taxon>Pseudomonadales</taxon>
        <taxon>Pseudomonadaceae</taxon>
        <taxon>Azotobacter</taxon>
    </lineage>
</organism>
<accession>P36223</accession>